<organism>
    <name type="scientific">Mus musculus</name>
    <name type="common">Mouse</name>
    <dbReference type="NCBI Taxonomy" id="10090"/>
    <lineage>
        <taxon>Eukaryota</taxon>
        <taxon>Metazoa</taxon>
        <taxon>Chordata</taxon>
        <taxon>Craniata</taxon>
        <taxon>Vertebrata</taxon>
        <taxon>Euteleostomi</taxon>
        <taxon>Mammalia</taxon>
        <taxon>Eutheria</taxon>
        <taxon>Euarchontoglires</taxon>
        <taxon>Glires</taxon>
        <taxon>Rodentia</taxon>
        <taxon>Myomorpha</taxon>
        <taxon>Muroidea</taxon>
        <taxon>Muridae</taxon>
        <taxon>Murinae</taxon>
        <taxon>Mus</taxon>
        <taxon>Mus</taxon>
    </lineage>
</organism>
<name>O5T17_MOUSE</name>
<comment type="function">
    <text>Potential odorant receptor.</text>
</comment>
<comment type="subcellular location">
    <subcellularLocation>
        <location evidence="3">Cell membrane</location>
        <topology evidence="1">Multi-pass membrane protein</topology>
    </subcellularLocation>
</comment>
<comment type="similarity">
    <text evidence="2">Belongs to the G-protein coupled receptor 1 family.</text>
</comment>
<evidence type="ECO:0000255" key="1"/>
<evidence type="ECO:0000255" key="2">
    <source>
        <dbReference type="PROSITE-ProRule" id="PRU00521"/>
    </source>
</evidence>
<evidence type="ECO:0000305" key="3"/>
<evidence type="ECO:0000312" key="4">
    <source>
        <dbReference type="MGI" id="MGI:3030936"/>
    </source>
</evidence>
<reference key="1">
    <citation type="journal article" date="2002" name="Hum. Mol. Genet.">
        <title>Different evolutionary processes shaped the mouse and human olfactory receptor gene families.</title>
        <authorList>
            <person name="Young J.M."/>
            <person name="Friedman C."/>
            <person name="Williams E.M."/>
            <person name="Ross J.A."/>
            <person name="Tonnes-Priddy L."/>
            <person name="Trask B.J."/>
        </authorList>
    </citation>
    <scope>NUCLEOTIDE SEQUENCE [GENOMIC DNA]</scope>
</reference>
<reference key="2">
    <citation type="journal article" date="2002" name="Hum. Mol. Genet.">
        <authorList>
            <person name="Young J.M."/>
            <person name="Friedman C."/>
            <person name="Williams E.M."/>
            <person name="Ross J.A."/>
            <person name="Tonnes-Priddy L."/>
            <person name="Trask B.J."/>
        </authorList>
    </citation>
    <scope>ERRATUM OF PUBMED:11875048</scope>
</reference>
<reference key="3">
    <citation type="journal article" date="2009" name="PLoS Biol.">
        <title>Lineage-specific biology revealed by a finished genome assembly of the mouse.</title>
        <authorList>
            <person name="Church D.M."/>
            <person name="Goodstadt L."/>
            <person name="Hillier L.W."/>
            <person name="Zody M.C."/>
            <person name="Goldstein S."/>
            <person name="She X."/>
            <person name="Bult C.J."/>
            <person name="Agarwala R."/>
            <person name="Cherry J.L."/>
            <person name="DiCuccio M."/>
            <person name="Hlavina W."/>
            <person name="Kapustin Y."/>
            <person name="Meric P."/>
            <person name="Maglott D."/>
            <person name="Birtle Z."/>
            <person name="Marques A.C."/>
            <person name="Graves T."/>
            <person name="Zhou S."/>
            <person name="Teague B."/>
            <person name="Potamousis K."/>
            <person name="Churas C."/>
            <person name="Place M."/>
            <person name="Herschleb J."/>
            <person name="Runnheim R."/>
            <person name="Forrest D."/>
            <person name="Amos-Landgraf J."/>
            <person name="Schwartz D.C."/>
            <person name="Cheng Z."/>
            <person name="Lindblad-Toh K."/>
            <person name="Eichler E.E."/>
            <person name="Ponting C.P."/>
        </authorList>
    </citation>
    <scope>NUCLEOTIDE SEQUENCE [LARGE SCALE GENOMIC DNA]</scope>
    <source>
        <strain>C57BL/6J</strain>
    </source>
</reference>
<reference key="4">
    <citation type="journal article" date="2002" name="Nat. Neurosci.">
        <title>The olfactory receptor gene superfamily of the mouse.</title>
        <authorList>
            <person name="Zhang X."/>
            <person name="Firestein S."/>
        </authorList>
    </citation>
    <scope>NUCLEOTIDE SEQUENCE [GENOMIC DNA] OF 57-324</scope>
</reference>
<sequence length="324" mass="36292">MPRTPSYTNTKTTQVNNVTEITVFILLGFTDDVDMNIFLFILFLAIYVVTLIGNLGLVVLVIEDSRLHNPMYYFLTVLSSLDACFSSVLTPKMLVNFLSKNKSISFAGCATQMLLFVTFGTTECFLLAAMAYDRYLAIYSPLLYAVRMSPRVYVPLIIASYTGGILHATIHTVATFSLSFCGSNEIRHVFCDIPPLLALSCSDTHLNQLLLFYCAGSIELITILIVLVSYGFVLLAILKINSAEGRRKIFSTCGAHLTGVSIFHGTILFMYVRPSSNYTLEQDMVVSTFYTIVIPMLNPIIYSLRNKDVKEAMRKLLKRKLVHE</sequence>
<gene>
    <name evidence="4" type="primary">Or5t17</name>
    <name evidence="4" type="synonym">Mor179-4</name>
    <name evidence="4" type="synonym">Olfr1102</name>
</gene>
<protein>
    <recommendedName>
        <fullName evidence="3">Olfactory receptor 5T17</fullName>
    </recommendedName>
    <alternativeName>
        <fullName>Olfactory receptor 1102</fullName>
    </alternativeName>
    <alternativeName>
        <fullName>Olfactory receptor 179-4</fullName>
    </alternativeName>
</protein>
<feature type="chain" id="PRO_0000150868" description="Olfactory receptor 5T17">
    <location>
        <begin position="1"/>
        <end position="324"/>
    </location>
</feature>
<feature type="topological domain" description="Extracellular" evidence="1">
    <location>
        <begin position="1"/>
        <end position="37"/>
    </location>
</feature>
<feature type="transmembrane region" description="Helical; Name=1" evidence="1">
    <location>
        <begin position="38"/>
        <end position="58"/>
    </location>
</feature>
<feature type="topological domain" description="Cytoplasmic" evidence="1">
    <location>
        <begin position="59"/>
        <end position="66"/>
    </location>
</feature>
<feature type="transmembrane region" description="Helical; Name=2" evidence="1">
    <location>
        <begin position="67"/>
        <end position="87"/>
    </location>
</feature>
<feature type="topological domain" description="Extracellular" evidence="1">
    <location>
        <begin position="88"/>
        <end position="111"/>
    </location>
</feature>
<feature type="transmembrane region" description="Helical; Name=3" evidence="1">
    <location>
        <begin position="112"/>
        <end position="132"/>
    </location>
</feature>
<feature type="topological domain" description="Cytoplasmic" evidence="1">
    <location>
        <begin position="133"/>
        <end position="145"/>
    </location>
</feature>
<feature type="transmembrane region" description="Helical; Name=4" evidence="1">
    <location>
        <begin position="146"/>
        <end position="166"/>
    </location>
</feature>
<feature type="topological domain" description="Extracellular" evidence="1">
    <location>
        <begin position="167"/>
        <end position="208"/>
    </location>
</feature>
<feature type="transmembrane region" description="Helical; Name=5" evidence="1">
    <location>
        <begin position="209"/>
        <end position="229"/>
    </location>
</feature>
<feature type="topological domain" description="Cytoplasmic" evidence="1">
    <location>
        <begin position="230"/>
        <end position="249"/>
    </location>
</feature>
<feature type="transmembrane region" description="Helical; Name=6" evidence="1">
    <location>
        <begin position="250"/>
        <end position="270"/>
    </location>
</feature>
<feature type="topological domain" description="Extracellular" evidence="1">
    <location>
        <begin position="271"/>
        <end position="283"/>
    </location>
</feature>
<feature type="transmembrane region" description="Helical; Name=7" evidence="1">
    <location>
        <begin position="284"/>
        <end position="304"/>
    </location>
</feature>
<feature type="topological domain" description="Cytoplasmic" evidence="1">
    <location>
        <begin position="305"/>
        <end position="324"/>
    </location>
</feature>
<feature type="glycosylation site" description="N-linked (GlcNAc...) asparagine" evidence="1">
    <location>
        <position position="17"/>
    </location>
</feature>
<feature type="glycosylation site" description="N-linked (GlcNAc...) asparagine" evidence="1">
    <location>
        <position position="101"/>
    </location>
</feature>
<feature type="glycosylation site" description="N-linked (GlcNAc...) asparagine" evidence="1">
    <location>
        <position position="277"/>
    </location>
</feature>
<feature type="disulfide bond" evidence="2">
    <location>
        <begin position="109"/>
        <end position="201"/>
    </location>
</feature>
<feature type="sequence conflict" description="In Ref. 4; AAL61491." evidence="3" ref="4">
    <original>V</original>
    <variation>A</variation>
    <location>
        <position position="95"/>
    </location>
</feature>
<feature type="sequence conflict" description="In Ref. 1; AAP71527 and 4; AAL61491." evidence="3" ref="1 4">
    <original>E</original>
    <variation>K</variation>
    <location>
        <position position="219"/>
    </location>
</feature>
<accession>Q8VES2</accession>
<accession>A2AVB4</accession>
<proteinExistence type="inferred from homology"/>
<keyword id="KW-1003">Cell membrane</keyword>
<keyword id="KW-1015">Disulfide bond</keyword>
<keyword id="KW-0297">G-protein coupled receptor</keyword>
<keyword id="KW-0325">Glycoprotein</keyword>
<keyword id="KW-0472">Membrane</keyword>
<keyword id="KW-0552">Olfaction</keyword>
<keyword id="KW-0675">Receptor</keyword>
<keyword id="KW-1185">Reference proteome</keyword>
<keyword id="KW-0716">Sensory transduction</keyword>
<keyword id="KW-0807">Transducer</keyword>
<keyword id="KW-0812">Transmembrane</keyword>
<keyword id="KW-1133">Transmembrane helix</keyword>
<dbReference type="EMBL" id="AY318299">
    <property type="protein sequence ID" value="AAP71527.1"/>
    <property type="molecule type" value="Genomic_DNA"/>
</dbReference>
<dbReference type="EMBL" id="AL929417">
    <property type="status" value="NOT_ANNOTATED_CDS"/>
    <property type="molecule type" value="Genomic_DNA"/>
</dbReference>
<dbReference type="EMBL" id="AY073828">
    <property type="protein sequence ID" value="AAL61491.1"/>
    <property type="molecule type" value="Genomic_DNA"/>
</dbReference>
<dbReference type="CCDS" id="CCDS16275.1"/>
<dbReference type="RefSeq" id="NP_997037.2">
    <property type="nucleotide sequence ID" value="NM_207154.2"/>
</dbReference>
<dbReference type="SMR" id="Q8VES2"/>
<dbReference type="FunCoup" id="Q8VES2">
    <property type="interactions" value="1165"/>
</dbReference>
<dbReference type="STRING" id="10090.ENSMUSP00000149634"/>
<dbReference type="GlyCosmos" id="Q8VES2">
    <property type="glycosylation" value="3 sites, No reported glycans"/>
</dbReference>
<dbReference type="GlyGen" id="Q8VES2">
    <property type="glycosylation" value="3 sites"/>
</dbReference>
<dbReference type="PhosphoSitePlus" id="Q8VES2"/>
<dbReference type="PaxDb" id="10090-ENSMUSP00000052861"/>
<dbReference type="DNASU" id="228228"/>
<dbReference type="Ensembl" id="ENSMUST00000055129.6">
    <property type="protein sequence ID" value="ENSMUSP00000052861.4"/>
    <property type="gene ID" value="ENSMUSG00000049843.7"/>
</dbReference>
<dbReference type="Ensembl" id="ENSMUST00000214002.2">
    <property type="protein sequence ID" value="ENSMUSP00000149634.2"/>
    <property type="gene ID" value="ENSMUSG00000049843.7"/>
</dbReference>
<dbReference type="GeneID" id="228228"/>
<dbReference type="KEGG" id="mmu:228228"/>
<dbReference type="UCSC" id="uc008kng.2">
    <property type="organism name" value="mouse"/>
</dbReference>
<dbReference type="AGR" id="MGI:3030936"/>
<dbReference type="CTD" id="228228"/>
<dbReference type="MGI" id="MGI:3030936">
    <property type="gene designation" value="Or5t17"/>
</dbReference>
<dbReference type="VEuPathDB" id="HostDB:ENSMUSG00000049843"/>
<dbReference type="eggNOG" id="ENOG502SHA3">
    <property type="taxonomic scope" value="Eukaryota"/>
</dbReference>
<dbReference type="GeneTree" id="ENSGT00940000153301"/>
<dbReference type="HOGENOM" id="CLU_012526_1_0_1"/>
<dbReference type="InParanoid" id="Q8VES2"/>
<dbReference type="OMA" id="ITEVTMF"/>
<dbReference type="OrthoDB" id="9827639at2759"/>
<dbReference type="PhylomeDB" id="Q8VES2"/>
<dbReference type="TreeFam" id="TF352753"/>
<dbReference type="BioGRID-ORCS" id="228228">
    <property type="hits" value="2 hits in 70 CRISPR screens"/>
</dbReference>
<dbReference type="PRO" id="PR:Q8VES2"/>
<dbReference type="Proteomes" id="UP000000589">
    <property type="component" value="Chromosome 2"/>
</dbReference>
<dbReference type="RNAct" id="Q8VES2">
    <property type="molecule type" value="protein"/>
</dbReference>
<dbReference type="GO" id="GO:0016020">
    <property type="term" value="C:membrane"/>
    <property type="evidence" value="ECO:0000247"/>
    <property type="project" value="MGI"/>
</dbReference>
<dbReference type="GO" id="GO:0005886">
    <property type="term" value="C:plasma membrane"/>
    <property type="evidence" value="ECO:0007669"/>
    <property type="project" value="UniProtKB-SubCell"/>
</dbReference>
<dbReference type="GO" id="GO:0004930">
    <property type="term" value="F:G protein-coupled receptor activity"/>
    <property type="evidence" value="ECO:0007669"/>
    <property type="project" value="UniProtKB-KW"/>
</dbReference>
<dbReference type="GO" id="GO:0004984">
    <property type="term" value="F:olfactory receptor activity"/>
    <property type="evidence" value="ECO:0000247"/>
    <property type="project" value="MGI"/>
</dbReference>
<dbReference type="GO" id="GO:0007186">
    <property type="term" value="P:G protein-coupled receptor signaling pathway"/>
    <property type="evidence" value="ECO:0000247"/>
    <property type="project" value="MGI"/>
</dbReference>
<dbReference type="GO" id="GO:0007608">
    <property type="term" value="P:sensory perception of smell"/>
    <property type="evidence" value="ECO:0000247"/>
    <property type="project" value="MGI"/>
</dbReference>
<dbReference type="FunFam" id="1.20.1070.10:FF:000004">
    <property type="entry name" value="Olfactory receptor"/>
    <property type="match status" value="1"/>
</dbReference>
<dbReference type="Gene3D" id="1.20.1070.10">
    <property type="entry name" value="Rhodopsin 7-helix transmembrane proteins"/>
    <property type="match status" value="1"/>
</dbReference>
<dbReference type="InterPro" id="IPR000276">
    <property type="entry name" value="GPCR_Rhodpsn"/>
</dbReference>
<dbReference type="InterPro" id="IPR017452">
    <property type="entry name" value="GPCR_Rhodpsn_7TM"/>
</dbReference>
<dbReference type="InterPro" id="IPR000725">
    <property type="entry name" value="Olfact_rcpt"/>
</dbReference>
<dbReference type="PANTHER" id="PTHR48018">
    <property type="entry name" value="OLFACTORY RECEPTOR"/>
    <property type="match status" value="1"/>
</dbReference>
<dbReference type="Pfam" id="PF13853">
    <property type="entry name" value="7tm_4"/>
    <property type="match status" value="1"/>
</dbReference>
<dbReference type="PRINTS" id="PR00237">
    <property type="entry name" value="GPCRRHODOPSN"/>
</dbReference>
<dbReference type="PRINTS" id="PR00245">
    <property type="entry name" value="OLFACTORYR"/>
</dbReference>
<dbReference type="SUPFAM" id="SSF81321">
    <property type="entry name" value="Family A G protein-coupled receptor-like"/>
    <property type="match status" value="1"/>
</dbReference>
<dbReference type="PROSITE" id="PS00237">
    <property type="entry name" value="G_PROTEIN_RECEP_F1_1"/>
    <property type="match status" value="1"/>
</dbReference>
<dbReference type="PROSITE" id="PS50262">
    <property type="entry name" value="G_PROTEIN_RECEP_F1_2"/>
    <property type="match status" value="1"/>
</dbReference>